<keyword id="KW-0067">ATP-binding</keyword>
<keyword id="KW-0173">Coenzyme A biosynthesis</keyword>
<keyword id="KW-0963">Cytoplasm</keyword>
<keyword id="KW-0418">Kinase</keyword>
<keyword id="KW-0547">Nucleotide-binding</keyword>
<keyword id="KW-0808">Transferase</keyword>
<accession>Q8CRM3</accession>
<organism>
    <name type="scientific">Staphylococcus epidermidis (strain ATCC 12228 / FDA PCI 1200)</name>
    <dbReference type="NCBI Taxonomy" id="176280"/>
    <lineage>
        <taxon>Bacteria</taxon>
        <taxon>Bacillati</taxon>
        <taxon>Bacillota</taxon>
        <taxon>Bacilli</taxon>
        <taxon>Bacillales</taxon>
        <taxon>Staphylococcaceae</taxon>
        <taxon>Staphylococcus</taxon>
    </lineage>
</organism>
<dbReference type="EC" id="2.7.1.33" evidence="1"/>
<dbReference type="EMBL" id="AE015929">
    <property type="protein sequence ID" value="AAO05327.1"/>
    <property type="molecule type" value="Genomic_DNA"/>
</dbReference>
<dbReference type="RefSeq" id="NP_765283.1">
    <property type="nucleotide sequence ID" value="NC_004461.1"/>
</dbReference>
<dbReference type="RefSeq" id="WP_002440556.1">
    <property type="nucleotide sequence ID" value="NZ_WBME01000041.1"/>
</dbReference>
<dbReference type="SMR" id="Q8CRM3"/>
<dbReference type="GeneID" id="50018173"/>
<dbReference type="KEGG" id="sep:SE_1728"/>
<dbReference type="PATRIC" id="fig|176280.10.peg.1688"/>
<dbReference type="eggNOG" id="COG5146">
    <property type="taxonomic scope" value="Bacteria"/>
</dbReference>
<dbReference type="HOGENOM" id="CLU_087521_1_0_9"/>
<dbReference type="OrthoDB" id="358216at2"/>
<dbReference type="UniPathway" id="UPA00241">
    <property type="reaction ID" value="UER00352"/>
</dbReference>
<dbReference type="Proteomes" id="UP000001411">
    <property type="component" value="Chromosome"/>
</dbReference>
<dbReference type="GO" id="GO:0005829">
    <property type="term" value="C:cytosol"/>
    <property type="evidence" value="ECO:0007669"/>
    <property type="project" value="TreeGrafter"/>
</dbReference>
<dbReference type="GO" id="GO:0005524">
    <property type="term" value="F:ATP binding"/>
    <property type="evidence" value="ECO:0007669"/>
    <property type="project" value="UniProtKB-UniRule"/>
</dbReference>
<dbReference type="GO" id="GO:0004594">
    <property type="term" value="F:pantothenate kinase activity"/>
    <property type="evidence" value="ECO:0007669"/>
    <property type="project" value="UniProtKB-UniRule"/>
</dbReference>
<dbReference type="GO" id="GO:0015937">
    <property type="term" value="P:coenzyme A biosynthetic process"/>
    <property type="evidence" value="ECO:0007669"/>
    <property type="project" value="UniProtKB-UniRule"/>
</dbReference>
<dbReference type="Gene3D" id="3.30.420.40">
    <property type="match status" value="1"/>
</dbReference>
<dbReference type="HAMAP" id="MF_01273">
    <property type="entry name" value="Pantothen_kinase_2"/>
    <property type="match status" value="1"/>
</dbReference>
<dbReference type="InterPro" id="IPR043129">
    <property type="entry name" value="ATPase_NBD"/>
</dbReference>
<dbReference type="InterPro" id="IPR004567">
    <property type="entry name" value="Type_II_PanK"/>
</dbReference>
<dbReference type="InterPro" id="IPR011602">
    <property type="entry name" value="Type_II_PanK_bac"/>
</dbReference>
<dbReference type="NCBIfam" id="TIGR00555">
    <property type="entry name" value="panK_eukar"/>
    <property type="match status" value="1"/>
</dbReference>
<dbReference type="NCBIfam" id="NF009842">
    <property type="entry name" value="PRK13317.1"/>
    <property type="match status" value="1"/>
</dbReference>
<dbReference type="PANTHER" id="PTHR12280:SF20">
    <property type="entry name" value="4'-PHOSPHOPANTETHEINE PHOSPHATASE"/>
    <property type="match status" value="1"/>
</dbReference>
<dbReference type="PANTHER" id="PTHR12280">
    <property type="entry name" value="PANTOTHENATE KINASE"/>
    <property type="match status" value="1"/>
</dbReference>
<dbReference type="Pfam" id="PF03630">
    <property type="entry name" value="Fumble"/>
    <property type="match status" value="1"/>
</dbReference>
<dbReference type="PIRSF" id="PIRSF036940">
    <property type="entry name" value="PanK_bac_aCoA"/>
    <property type="match status" value="1"/>
</dbReference>
<dbReference type="SUPFAM" id="SSF53067">
    <property type="entry name" value="Actin-like ATPase domain"/>
    <property type="match status" value="1"/>
</dbReference>
<comment type="function">
    <text evidence="1">Catalyzes the phosphorylation of pantothenate (Pan), the first step in CoA biosynthesis.</text>
</comment>
<comment type="catalytic activity">
    <reaction evidence="1">
        <text>(R)-pantothenate + ATP = (R)-4'-phosphopantothenate + ADP + H(+)</text>
        <dbReference type="Rhea" id="RHEA:16373"/>
        <dbReference type="ChEBI" id="CHEBI:10986"/>
        <dbReference type="ChEBI" id="CHEBI:15378"/>
        <dbReference type="ChEBI" id="CHEBI:29032"/>
        <dbReference type="ChEBI" id="CHEBI:30616"/>
        <dbReference type="ChEBI" id="CHEBI:456216"/>
        <dbReference type="EC" id="2.7.1.33"/>
    </reaction>
</comment>
<comment type="pathway">
    <text evidence="1">Cofactor biosynthesis; coenzyme A biosynthesis; CoA from (R)-pantothenate: step 1/5.</text>
</comment>
<comment type="subunit">
    <text evidence="1">Homodimer.</text>
</comment>
<comment type="subcellular location">
    <subcellularLocation>
        <location evidence="1">Cytoplasm</location>
    </subcellularLocation>
</comment>
<comment type="similarity">
    <text evidence="1">Belongs to the type II pantothenate kinase family.</text>
</comment>
<protein>
    <recommendedName>
        <fullName evidence="1">Type II pantothenate kinase</fullName>
        <ecNumber evidence="1">2.7.1.33</ecNumber>
    </recommendedName>
    <alternativeName>
        <fullName evidence="1">PanK-II</fullName>
    </alternativeName>
    <alternativeName>
        <fullName evidence="1">Pantothenic acid kinase</fullName>
    </alternativeName>
</protein>
<sequence length="265" mass="29234">MKIGIDAGGTLIKIVQEHDNRRYYRTELTTNIQKVIDWLNNEEIETLKLTGGNAGVIADQIHHSPEIFVEFDASSKGLEILLDEQGHQIEHYIFANVGTGTSFHYFDGKDQQRVGGVGTGGGMIQGLGYLLSNITDYKELTNLAQNGDRDAIDLKVKHIYKDTEPPIPGDLTAANFGNVLHHLDNQFTSANKLASAIGVVGEVITTMAITLAREYKTNHVVYIGSSFNNNQLLREVVENYTVLRGFKPYYIENGAFSGALGALYL</sequence>
<proteinExistence type="inferred from homology"/>
<evidence type="ECO:0000255" key="1">
    <source>
        <dbReference type="HAMAP-Rule" id="MF_01273"/>
    </source>
</evidence>
<gene>
    <name evidence="1" type="primary">coaW</name>
    <name type="ordered locus">SE_1728</name>
</gene>
<reference key="1">
    <citation type="journal article" date="2003" name="Mol. Microbiol.">
        <title>Genome-based analysis of virulence genes in a non-biofilm-forming Staphylococcus epidermidis strain (ATCC 12228).</title>
        <authorList>
            <person name="Zhang Y.-Q."/>
            <person name="Ren S.-X."/>
            <person name="Li H.-L."/>
            <person name="Wang Y.-X."/>
            <person name="Fu G."/>
            <person name="Yang J."/>
            <person name="Qin Z.-Q."/>
            <person name="Miao Y.-G."/>
            <person name="Wang W.-Y."/>
            <person name="Chen R.-S."/>
            <person name="Shen Y."/>
            <person name="Chen Z."/>
            <person name="Yuan Z.-H."/>
            <person name="Zhao G.-P."/>
            <person name="Qu D."/>
            <person name="Danchin A."/>
            <person name="Wen Y.-M."/>
        </authorList>
    </citation>
    <scope>NUCLEOTIDE SEQUENCE [LARGE SCALE GENOMIC DNA]</scope>
    <source>
        <strain>ATCC 12228 / FDA PCI 1200</strain>
    </source>
</reference>
<name>COAW_STAES</name>
<feature type="chain" id="PRO_0000261352" description="Type II pantothenate kinase">
    <location>
        <begin position="1"/>
        <end position="265"/>
    </location>
</feature>
<feature type="active site" description="Proton acceptor" evidence="1">
    <location>
        <position position="70"/>
    </location>
</feature>
<feature type="binding site" evidence="1">
    <location>
        <begin position="6"/>
        <end position="13"/>
    </location>
    <ligand>
        <name>ATP</name>
        <dbReference type="ChEBI" id="CHEBI:30616"/>
    </ligand>
</feature>
<feature type="binding site" evidence="1">
    <location>
        <position position="99"/>
    </location>
    <ligand>
        <name>ATP</name>
        <dbReference type="ChEBI" id="CHEBI:30616"/>
    </ligand>
</feature>
<feature type="binding site" evidence="1">
    <location>
        <begin position="121"/>
        <end position="125"/>
    </location>
    <ligand>
        <name>ATP</name>
        <dbReference type="ChEBI" id="CHEBI:30616"/>
    </ligand>
</feature>
<feature type="binding site" evidence="1">
    <location>
        <position position="137"/>
    </location>
    <ligand>
        <name>ATP</name>
        <dbReference type="ChEBI" id="CHEBI:30616"/>
    </ligand>
</feature>
<feature type="binding site" evidence="1">
    <location>
        <position position="225"/>
    </location>
    <ligand>
        <name>ATP</name>
        <dbReference type="ChEBI" id="CHEBI:30616"/>
    </ligand>
</feature>